<evidence type="ECO:0000250" key="1"/>
<evidence type="ECO:0000256" key="2">
    <source>
        <dbReference type="SAM" id="MobiDB-lite"/>
    </source>
</evidence>
<evidence type="ECO:0000305" key="3"/>
<protein>
    <recommendedName>
        <fullName>Brain ribonuclease</fullName>
        <shortName>BRB</shortName>
        <ecNumber>3.1.27.-</ecNumber>
    </recommendedName>
</protein>
<keyword id="KW-1015">Disulfide bond</keyword>
<keyword id="KW-0255">Endonuclease</keyword>
<keyword id="KW-0325">Glycoprotein</keyword>
<keyword id="KW-0378">Hydrolase</keyword>
<keyword id="KW-0540">Nuclease</keyword>
<keyword id="KW-0964">Secreted</keyword>
<name>RNBR_AXIPR</name>
<comment type="subcellular location">
    <subcellularLocation>
        <location>Secreted</location>
    </subcellularLocation>
</comment>
<comment type="similarity">
    <text evidence="3">Belongs to the pancreatic ribonuclease family.</text>
</comment>
<dbReference type="EC" id="3.1.27.-"/>
<dbReference type="EMBL" id="Y11670">
    <property type="protein sequence ID" value="CAA72368.1"/>
    <property type="molecule type" value="Genomic_DNA"/>
</dbReference>
<dbReference type="SMR" id="P87350"/>
<dbReference type="GlyCosmos" id="P87350">
    <property type="glycosylation" value="3 sites, No reported glycans"/>
</dbReference>
<dbReference type="GO" id="GO:0005576">
    <property type="term" value="C:extracellular region"/>
    <property type="evidence" value="ECO:0007669"/>
    <property type="project" value="UniProtKB-SubCell"/>
</dbReference>
<dbReference type="GO" id="GO:0004519">
    <property type="term" value="F:endonuclease activity"/>
    <property type="evidence" value="ECO:0007669"/>
    <property type="project" value="UniProtKB-KW"/>
</dbReference>
<dbReference type="GO" id="GO:0003676">
    <property type="term" value="F:nucleic acid binding"/>
    <property type="evidence" value="ECO:0007669"/>
    <property type="project" value="InterPro"/>
</dbReference>
<dbReference type="GO" id="GO:0004540">
    <property type="term" value="F:RNA nuclease activity"/>
    <property type="evidence" value="ECO:0007669"/>
    <property type="project" value="TreeGrafter"/>
</dbReference>
<dbReference type="GO" id="GO:0050830">
    <property type="term" value="P:defense response to Gram-positive bacterium"/>
    <property type="evidence" value="ECO:0007669"/>
    <property type="project" value="TreeGrafter"/>
</dbReference>
<dbReference type="CDD" id="cd06265">
    <property type="entry name" value="RNase_A_canonical"/>
    <property type="match status" value="1"/>
</dbReference>
<dbReference type="FunFam" id="3.10.130.10:FF:000001">
    <property type="entry name" value="Ribonuclease pancreatic"/>
    <property type="match status" value="1"/>
</dbReference>
<dbReference type="Gene3D" id="3.10.130.10">
    <property type="entry name" value="Ribonuclease A-like domain"/>
    <property type="match status" value="1"/>
</dbReference>
<dbReference type="InterPro" id="IPR001427">
    <property type="entry name" value="RNaseA"/>
</dbReference>
<dbReference type="InterPro" id="IPR036816">
    <property type="entry name" value="RNaseA-like_dom_sf"/>
</dbReference>
<dbReference type="InterPro" id="IPR023411">
    <property type="entry name" value="RNaseA_AS"/>
</dbReference>
<dbReference type="InterPro" id="IPR023412">
    <property type="entry name" value="RNaseA_domain"/>
</dbReference>
<dbReference type="PANTHER" id="PTHR11437">
    <property type="entry name" value="RIBONUCLEASE"/>
    <property type="match status" value="1"/>
</dbReference>
<dbReference type="PANTHER" id="PTHR11437:SF24">
    <property type="entry name" value="RIBONUCLEASE PANCREATIC"/>
    <property type="match status" value="1"/>
</dbReference>
<dbReference type="Pfam" id="PF00074">
    <property type="entry name" value="RnaseA"/>
    <property type="match status" value="1"/>
</dbReference>
<dbReference type="PRINTS" id="PR00794">
    <property type="entry name" value="RIBONUCLEASE"/>
</dbReference>
<dbReference type="SMART" id="SM00092">
    <property type="entry name" value="RNAse_Pc"/>
    <property type="match status" value="1"/>
</dbReference>
<dbReference type="SUPFAM" id="SSF54076">
    <property type="entry name" value="RNase A-like"/>
    <property type="match status" value="1"/>
</dbReference>
<dbReference type="PROSITE" id="PS00127">
    <property type="entry name" value="RNASE_PANCREATIC"/>
    <property type="match status" value="1"/>
</dbReference>
<reference key="1">
    <citation type="journal article" date="1998" name="Gene">
        <title>Secretory ribonuclease genes and pseudogenes in true ruminants.</title>
        <authorList>
            <person name="Breukelman H.J."/>
            <person name="van der Munnik N."/>
            <person name="Kleineidam R.G."/>
            <person name="Furia A."/>
            <person name="Beintema J.J."/>
        </authorList>
    </citation>
    <scope>NUCLEOTIDE SEQUENCE [GENOMIC DNA]</scope>
</reference>
<proteinExistence type="inferred from homology"/>
<organism>
    <name type="scientific">Axis porcinus</name>
    <name type="common">Hog deer</name>
    <dbReference type="NCBI Taxonomy" id="57737"/>
    <lineage>
        <taxon>Eukaryota</taxon>
        <taxon>Metazoa</taxon>
        <taxon>Chordata</taxon>
        <taxon>Craniata</taxon>
        <taxon>Vertebrata</taxon>
        <taxon>Euteleostomi</taxon>
        <taxon>Mammalia</taxon>
        <taxon>Eutheria</taxon>
        <taxon>Laurasiatheria</taxon>
        <taxon>Artiodactyla</taxon>
        <taxon>Ruminantia</taxon>
        <taxon>Pecora</taxon>
        <taxon>Cervidae</taxon>
        <taxon>Cervinae</taxon>
        <taxon>Axis</taxon>
    </lineage>
</organism>
<accession>P87350</accession>
<feature type="chain" id="PRO_0000057165" description="Brain ribonuclease">
    <location>
        <begin position="1"/>
        <end position="151"/>
    </location>
</feature>
<feature type="region of interest" description="Disordered" evidence="2">
    <location>
        <begin position="1"/>
        <end position="25"/>
    </location>
</feature>
<feature type="active site" description="Proton acceptor" evidence="1">
    <location>
        <position position="12"/>
    </location>
</feature>
<feature type="active site" description="Proton donor" evidence="1">
    <location>
        <position position="119"/>
    </location>
</feature>
<feature type="binding site" evidence="1">
    <location>
        <position position="7"/>
    </location>
    <ligand>
        <name>substrate</name>
    </ligand>
</feature>
<feature type="binding site" evidence="1">
    <location>
        <position position="10"/>
    </location>
    <ligand>
        <name>substrate</name>
    </ligand>
</feature>
<feature type="binding site" evidence="1">
    <location>
        <begin position="41"/>
        <end position="45"/>
    </location>
    <ligand>
        <name>substrate</name>
    </ligand>
</feature>
<feature type="binding site" evidence="1">
    <location>
        <position position="66"/>
    </location>
    <ligand>
        <name>substrate</name>
    </ligand>
</feature>
<feature type="binding site" evidence="1">
    <location>
        <position position="85"/>
    </location>
    <ligand>
        <name>substrate</name>
    </ligand>
</feature>
<feature type="glycosylation site" description="N-linked (GlcNAc...) asparagine" evidence="1">
    <location>
        <position position="62"/>
    </location>
</feature>
<feature type="glycosylation site" description="O-linked (GalNAc...) threonine" evidence="1">
    <location>
        <position position="129"/>
    </location>
</feature>
<feature type="glycosylation site" description="O-linked (GalNAc...) serine" evidence="1">
    <location>
        <position position="133"/>
    </location>
</feature>
<feature type="disulfide bond" evidence="1">
    <location>
        <begin position="26"/>
        <end position="84"/>
    </location>
</feature>
<feature type="disulfide bond" evidence="1">
    <location>
        <begin position="40"/>
        <end position="95"/>
    </location>
</feature>
<feature type="disulfide bond" evidence="1">
    <location>
        <begin position="58"/>
        <end position="110"/>
    </location>
</feature>
<feature type="disulfide bond" evidence="1">
    <location>
        <begin position="65"/>
        <end position="72"/>
    </location>
</feature>
<gene>
    <name type="primary">BRN</name>
</gene>
<sequence>KESAAAKFRRQHMDAGSSSSGNSNYCNQMMKRRRMTHGRCKPVNTFVHESLDSVKAVCSQKNITCKNGQPNCYQSNSTMNITDCRETGSSKYPNCAYKTSQKQKYITVACEGNPYVPVHFDGSVFLPATPLPSLPAPHKHRLLWLEGNNSS</sequence>